<sequence>MKMTVDFEECLKDSPRFRAALEEVEGDVAELELKLDKLVKLCIAMIDTGKAFCAANKQFMNGIRDLAQYSSNDAVVETSLTKFSDSLQEMINFHTILFDQTQRSIKAQLQNFVKEDLRKFKDAKKQFEKVSEEKENALVKNAQVQRNKQHEVEEAANILTATRKCFRHIALDYVLQINVLQSKRRSEILKSMLSFMYAHLAFFHQGYDLFSELGPYMKDLGAQLDRLVVDAAKEKREMEQKHSTIQQKDFSSDDSKLEYNVDAANGIVMEGYLFKRASNAFKTWNRRWFSIQNNQLVYQKKFKDSPTVVVEDLRLCTVKHCEDIERRFCFEVVSPTKSCMLQADSEKLRQAWIKAVQTSIATAYREKGDESEKLDKKSSPSTGSLDSGSESKEKLLKGESALQRVQCIPGNTSCCDCGLADPRWASINLGITLCIECSGIHRSLGVHFSKVRSLTLDTWEPELLKLMCELGNDVINRVYEAKLEKMGVKKPQPGQRQEKEAYIRAKYVERKFVDKYSTLLSPSEQEKRIISKSCEDQRLSHTRVSVHTPVKSNDSGIQQCSDDGRESLPSTVSANSLYEPEGERQESSVFLDSKHLNPGLQLYRASYEKNLPKMAEALAHGADVNWANSDENQATPLIQAVLGGSLVTCEFLLQNGANVNQRDVQGRGPLHHATVLGHTGQVCLFLKRGANQHATDEEGKDPLSIAVEAANADIVTLLRLARMNEEMRESEGLYGQPGDETYQDIFRDFSQMASNNPEKLNRFQQDSQKF</sequence>
<accession>Q5FVC7</accession>
<dbReference type="EMBL" id="BC090073">
    <property type="protein sequence ID" value="AAH90073.1"/>
    <property type="molecule type" value="mRNA"/>
</dbReference>
<dbReference type="RefSeq" id="NP_001029178.1">
    <property type="nucleotide sequence ID" value="NM_001034006.2"/>
</dbReference>
<dbReference type="RefSeq" id="XP_017459763.1">
    <property type="nucleotide sequence ID" value="XM_017604274.1"/>
</dbReference>
<dbReference type="SMR" id="Q5FVC7"/>
<dbReference type="FunCoup" id="Q5FVC7">
    <property type="interactions" value="4590"/>
</dbReference>
<dbReference type="STRING" id="10116.ENSRNOP00000073162"/>
<dbReference type="iPTMnet" id="Q5FVC7"/>
<dbReference type="PhosphoSitePlus" id="Q5FVC7"/>
<dbReference type="jPOST" id="Q5FVC7"/>
<dbReference type="PaxDb" id="10116-ENSRNOP00000030250"/>
<dbReference type="GeneID" id="619382"/>
<dbReference type="KEGG" id="rno:619382"/>
<dbReference type="UCSC" id="RGD:1562939">
    <property type="organism name" value="rat"/>
</dbReference>
<dbReference type="AGR" id="RGD:1562939"/>
<dbReference type="CTD" id="23527"/>
<dbReference type="RGD" id="1562939">
    <property type="gene designation" value="Acap2"/>
</dbReference>
<dbReference type="VEuPathDB" id="HostDB:ENSRNOG00000001730"/>
<dbReference type="eggNOG" id="KOG0521">
    <property type="taxonomic scope" value="Eukaryota"/>
</dbReference>
<dbReference type="HOGENOM" id="CLU_012513_0_1_1"/>
<dbReference type="InParanoid" id="Q5FVC7"/>
<dbReference type="PhylomeDB" id="Q5FVC7"/>
<dbReference type="TreeFam" id="TF318315"/>
<dbReference type="PRO" id="PR:Q5FVC7"/>
<dbReference type="Proteomes" id="UP000002494">
    <property type="component" value="Chromosome 11"/>
</dbReference>
<dbReference type="Bgee" id="ENSRNOG00000001730">
    <property type="expression patterns" value="Expressed in esophagus and 19 other cell types or tissues"/>
</dbReference>
<dbReference type="ExpressionAtlas" id="Q5FVC7">
    <property type="expression patterns" value="baseline and differential"/>
</dbReference>
<dbReference type="GO" id="GO:0010008">
    <property type="term" value="C:endosome membrane"/>
    <property type="evidence" value="ECO:0000314"/>
    <property type="project" value="UniProtKB"/>
</dbReference>
<dbReference type="GO" id="GO:0005886">
    <property type="term" value="C:plasma membrane"/>
    <property type="evidence" value="ECO:0000250"/>
    <property type="project" value="UniProtKB"/>
</dbReference>
<dbReference type="GO" id="GO:0001726">
    <property type="term" value="C:ruffle"/>
    <property type="evidence" value="ECO:0000266"/>
    <property type="project" value="RGD"/>
</dbReference>
<dbReference type="GO" id="GO:0005096">
    <property type="term" value="F:GTPase activator activity"/>
    <property type="evidence" value="ECO:0000266"/>
    <property type="project" value="RGD"/>
</dbReference>
<dbReference type="GO" id="GO:0080025">
    <property type="term" value="F:phosphatidylinositol-3,5-bisphosphate binding"/>
    <property type="evidence" value="ECO:0000266"/>
    <property type="project" value="RGD"/>
</dbReference>
<dbReference type="GO" id="GO:0031267">
    <property type="term" value="F:small GTPase binding"/>
    <property type="evidence" value="ECO:0000266"/>
    <property type="project" value="RGD"/>
</dbReference>
<dbReference type="GO" id="GO:0008270">
    <property type="term" value="F:zinc ion binding"/>
    <property type="evidence" value="ECO:0007669"/>
    <property type="project" value="UniProtKB-KW"/>
</dbReference>
<dbReference type="GO" id="GO:0030029">
    <property type="term" value="P:actin filament-based process"/>
    <property type="evidence" value="ECO:0000266"/>
    <property type="project" value="RGD"/>
</dbReference>
<dbReference type="GO" id="GO:1990090">
    <property type="term" value="P:cellular response to nerve growth factor stimulus"/>
    <property type="evidence" value="ECO:0000314"/>
    <property type="project" value="UniProtKB"/>
</dbReference>
<dbReference type="GO" id="GO:0032456">
    <property type="term" value="P:endocytic recycling"/>
    <property type="evidence" value="ECO:0000315"/>
    <property type="project" value="UniProtKB"/>
</dbReference>
<dbReference type="CDD" id="cd08851">
    <property type="entry name" value="ArfGap_ACAP2"/>
    <property type="match status" value="1"/>
</dbReference>
<dbReference type="CDD" id="cd07638">
    <property type="entry name" value="BAR_ACAP2"/>
    <property type="match status" value="1"/>
</dbReference>
<dbReference type="CDD" id="cd13250">
    <property type="entry name" value="PH_ACAP"/>
    <property type="match status" value="1"/>
</dbReference>
<dbReference type="FunFam" id="1.10.220.150:FF:000007">
    <property type="entry name" value="Arf-GAP with coiled-coil, ANK repeat and PH domain-containing protein 2"/>
    <property type="match status" value="1"/>
</dbReference>
<dbReference type="FunFam" id="1.25.40.20:FF:000020">
    <property type="entry name" value="Arf-GAP with coiled-coil, ANK repeat and PH domain-containing protein 2"/>
    <property type="match status" value="1"/>
</dbReference>
<dbReference type="FunFam" id="2.30.29.30:FF:000026">
    <property type="entry name" value="Arf-GAP with coiled-coil, ANK repeat and PH domain-containing protein 2"/>
    <property type="match status" value="1"/>
</dbReference>
<dbReference type="FunFam" id="1.20.1270.60:FF:000025">
    <property type="entry name" value="arf-GAP with coiled-coil, ANK repeat and PH domain-containing protein 2"/>
    <property type="match status" value="1"/>
</dbReference>
<dbReference type="Gene3D" id="1.25.40.20">
    <property type="entry name" value="Ankyrin repeat-containing domain"/>
    <property type="match status" value="1"/>
</dbReference>
<dbReference type="Gene3D" id="1.10.220.150">
    <property type="entry name" value="Arf GTPase activating protein"/>
    <property type="match status" value="1"/>
</dbReference>
<dbReference type="Gene3D" id="1.20.1270.60">
    <property type="entry name" value="Arfaptin homology (AH) domain/BAR domain"/>
    <property type="match status" value="1"/>
</dbReference>
<dbReference type="Gene3D" id="2.30.29.30">
    <property type="entry name" value="Pleckstrin-homology domain (PH domain)/Phosphotyrosine-binding domain (PTB)"/>
    <property type="match status" value="1"/>
</dbReference>
<dbReference type="InterPro" id="IPR045258">
    <property type="entry name" value="ACAP1/2/3-like"/>
</dbReference>
<dbReference type="InterPro" id="IPR027267">
    <property type="entry name" value="AH/BAR_dom_sf"/>
</dbReference>
<dbReference type="InterPro" id="IPR002110">
    <property type="entry name" value="Ankyrin_rpt"/>
</dbReference>
<dbReference type="InterPro" id="IPR036770">
    <property type="entry name" value="Ankyrin_rpt-contain_sf"/>
</dbReference>
<dbReference type="InterPro" id="IPR037278">
    <property type="entry name" value="ARFGAP/RecO"/>
</dbReference>
<dbReference type="InterPro" id="IPR001164">
    <property type="entry name" value="ArfGAP_dom"/>
</dbReference>
<dbReference type="InterPro" id="IPR038508">
    <property type="entry name" value="ArfGAP_dom_sf"/>
</dbReference>
<dbReference type="InterPro" id="IPR004148">
    <property type="entry name" value="BAR_dom"/>
</dbReference>
<dbReference type="InterPro" id="IPR011993">
    <property type="entry name" value="PH-like_dom_sf"/>
</dbReference>
<dbReference type="InterPro" id="IPR001849">
    <property type="entry name" value="PH_domain"/>
</dbReference>
<dbReference type="PANTHER" id="PTHR23180:SF241">
    <property type="entry name" value="ARF-GAP WITH COILED-COIL, ANK REPEAT AND PH DOMAIN-CONTAINING PROTEIN 2"/>
    <property type="match status" value="1"/>
</dbReference>
<dbReference type="PANTHER" id="PTHR23180">
    <property type="entry name" value="CENTAURIN/ARF"/>
    <property type="match status" value="1"/>
</dbReference>
<dbReference type="Pfam" id="PF12796">
    <property type="entry name" value="Ank_2"/>
    <property type="match status" value="1"/>
</dbReference>
<dbReference type="Pfam" id="PF01412">
    <property type="entry name" value="ArfGap"/>
    <property type="match status" value="1"/>
</dbReference>
<dbReference type="Pfam" id="PF16746">
    <property type="entry name" value="BAR_3"/>
    <property type="match status" value="1"/>
</dbReference>
<dbReference type="Pfam" id="PF00169">
    <property type="entry name" value="PH"/>
    <property type="match status" value="1"/>
</dbReference>
<dbReference type="PRINTS" id="PR00405">
    <property type="entry name" value="REVINTRACTNG"/>
</dbReference>
<dbReference type="SMART" id="SM00248">
    <property type="entry name" value="ANK"/>
    <property type="match status" value="3"/>
</dbReference>
<dbReference type="SMART" id="SM00105">
    <property type="entry name" value="ArfGap"/>
    <property type="match status" value="1"/>
</dbReference>
<dbReference type="SMART" id="SM00233">
    <property type="entry name" value="PH"/>
    <property type="match status" value="1"/>
</dbReference>
<dbReference type="SUPFAM" id="SSF48403">
    <property type="entry name" value="Ankyrin repeat"/>
    <property type="match status" value="1"/>
</dbReference>
<dbReference type="SUPFAM" id="SSF57863">
    <property type="entry name" value="ArfGap/RecO-like zinc finger"/>
    <property type="match status" value="1"/>
</dbReference>
<dbReference type="SUPFAM" id="SSF103657">
    <property type="entry name" value="BAR/IMD domain-like"/>
    <property type="match status" value="1"/>
</dbReference>
<dbReference type="SUPFAM" id="SSF50729">
    <property type="entry name" value="PH domain-like"/>
    <property type="match status" value="1"/>
</dbReference>
<dbReference type="PROSITE" id="PS50297">
    <property type="entry name" value="ANK_REP_REGION"/>
    <property type="match status" value="1"/>
</dbReference>
<dbReference type="PROSITE" id="PS50088">
    <property type="entry name" value="ANK_REPEAT"/>
    <property type="match status" value="2"/>
</dbReference>
<dbReference type="PROSITE" id="PS50115">
    <property type="entry name" value="ARFGAP"/>
    <property type="match status" value="1"/>
</dbReference>
<dbReference type="PROSITE" id="PS50003">
    <property type="entry name" value="PH_DOMAIN"/>
    <property type="match status" value="1"/>
</dbReference>
<proteinExistence type="evidence at protein level"/>
<keyword id="KW-0040">ANK repeat</keyword>
<keyword id="KW-1003">Cell membrane</keyword>
<keyword id="KW-0175">Coiled coil</keyword>
<keyword id="KW-0967">Endosome</keyword>
<keyword id="KW-0343">GTPase activation</keyword>
<keyword id="KW-0472">Membrane</keyword>
<keyword id="KW-0479">Metal-binding</keyword>
<keyword id="KW-0597">Phosphoprotein</keyword>
<keyword id="KW-1185">Reference proteome</keyword>
<keyword id="KW-0677">Repeat</keyword>
<keyword id="KW-0862">Zinc</keyword>
<keyword id="KW-0863">Zinc-finger</keyword>
<gene>
    <name type="primary">Acap2</name>
    <name type="synonym">Centb2</name>
</gene>
<reference evidence="8" key="1">
    <citation type="journal article" date="2004" name="Genome Res.">
        <title>The status, quality, and expansion of the NIH full-length cDNA project: the Mammalian Gene Collection (MGC).</title>
        <authorList>
            <consortium name="The MGC Project Team"/>
        </authorList>
    </citation>
    <scope>NUCLEOTIDE SEQUENCE [LARGE SCALE MRNA]</scope>
    <source>
        <tissue evidence="8">Testis</tissue>
    </source>
</reference>
<reference key="2">
    <citation type="journal article" date="2012" name="Nat. Commun.">
        <title>Quantitative maps of protein phosphorylation sites across 14 different rat organs and tissues.</title>
        <authorList>
            <person name="Lundby A."/>
            <person name="Secher A."/>
            <person name="Lage K."/>
            <person name="Nordsborg N.B."/>
            <person name="Dmytriyev A."/>
            <person name="Lundby C."/>
            <person name="Olsen J.V."/>
        </authorList>
    </citation>
    <scope>PHOSPHORYLATION [LARGE SCALE ANALYSIS] AT SER-521</scope>
    <scope>IDENTIFICATION BY MASS SPECTROMETRY [LARGE SCALE ANALYSIS]</scope>
</reference>
<reference key="3">
    <citation type="journal article" date="2013" name="J. Cell Sci.">
        <title>Rab35 establishes the EHD1-association site by coordinating two distinct effectors during neurite outgrowth.</title>
        <authorList>
            <person name="Kobayashi H."/>
            <person name="Fukuda M."/>
        </authorList>
    </citation>
    <scope>INTERACTION WITH RAB35</scope>
    <scope>SUBCELLULAR LOCATION</scope>
</reference>
<feature type="chain" id="PRO_0000306387" description="Arf-GAP with coiled-coil, ANK repeat and PH domain-containing protein 2">
    <location>
        <begin position="1"/>
        <end position="770"/>
    </location>
</feature>
<feature type="domain" description="BAR" evidence="3">
    <location>
        <begin position="6"/>
        <end position="226"/>
    </location>
</feature>
<feature type="domain" description="PH" evidence="4">
    <location>
        <begin position="266"/>
        <end position="361"/>
    </location>
</feature>
<feature type="domain" description="Arf-GAP" evidence="5">
    <location>
        <begin position="399"/>
        <end position="520"/>
    </location>
</feature>
<feature type="repeat" description="ANK 1" evidence="3">
    <location>
        <begin position="632"/>
        <end position="661"/>
    </location>
</feature>
<feature type="repeat" description="ANK 2" evidence="3">
    <location>
        <begin position="665"/>
        <end position="694"/>
    </location>
</feature>
<feature type="repeat" description="ANK 3" evidence="3">
    <location>
        <begin position="698"/>
        <end position="727"/>
    </location>
</feature>
<feature type="zinc finger region" description="C4-type" evidence="5">
    <location>
        <begin position="414"/>
        <end position="437"/>
    </location>
</feature>
<feature type="region of interest" description="Disordered" evidence="6">
    <location>
        <begin position="371"/>
        <end position="392"/>
    </location>
</feature>
<feature type="region of interest" description="Disordered" evidence="6">
    <location>
        <begin position="548"/>
        <end position="571"/>
    </location>
</feature>
<feature type="compositionally biased region" description="Low complexity" evidence="6">
    <location>
        <begin position="379"/>
        <end position="388"/>
    </location>
</feature>
<feature type="compositionally biased region" description="Polar residues" evidence="6">
    <location>
        <begin position="548"/>
        <end position="561"/>
    </location>
</feature>
<feature type="modified residue" description="Phosphoserine" evidence="1">
    <location>
        <position position="384"/>
    </location>
</feature>
<feature type="modified residue" description="Phosphoserine" evidence="2">
    <location>
        <position position="387"/>
    </location>
</feature>
<feature type="modified residue" description="Phosphoserine" evidence="9">
    <location>
        <position position="521"/>
    </location>
</feature>
<feature type="modified residue" description="Phosphoserine" evidence="1">
    <location>
        <position position="573"/>
    </location>
</feature>
<feature type="modified residue" description="Phosphoserine" evidence="2">
    <location>
        <position position="576"/>
    </location>
</feature>
<feature type="modified residue" description="Phosphotyrosine" evidence="1">
    <location>
        <position position="734"/>
    </location>
</feature>
<feature type="modified residue" description="Phosphoserine" evidence="1">
    <location>
        <position position="767"/>
    </location>
</feature>
<evidence type="ECO:0000250" key="1">
    <source>
        <dbReference type="UniProtKB" id="Q15057"/>
    </source>
</evidence>
<evidence type="ECO:0000250" key="2">
    <source>
        <dbReference type="UniProtKB" id="Q6ZQK5"/>
    </source>
</evidence>
<evidence type="ECO:0000255" key="3"/>
<evidence type="ECO:0000255" key="4">
    <source>
        <dbReference type="PROSITE-ProRule" id="PRU00145"/>
    </source>
</evidence>
<evidence type="ECO:0000255" key="5">
    <source>
        <dbReference type="PROSITE-ProRule" id="PRU00288"/>
    </source>
</evidence>
<evidence type="ECO:0000256" key="6">
    <source>
        <dbReference type="SAM" id="MobiDB-lite"/>
    </source>
</evidence>
<evidence type="ECO:0000269" key="7">
    <source>
    </source>
</evidence>
<evidence type="ECO:0000312" key="8">
    <source>
        <dbReference type="EMBL" id="AAH90073.1"/>
    </source>
</evidence>
<evidence type="ECO:0007744" key="9">
    <source>
    </source>
</evidence>
<comment type="function">
    <text evidence="1">GTPase-activating protein (GAP) for ADP ribosylation factor 6 (ARF6). Doesn't show GAP activity for RAB35.</text>
</comment>
<comment type="activity regulation">
    <text evidence="1">GAP activity stimulated by phosphatidylinositol 4,5-bisphosphate (PIP2) and phosphatidic acid.</text>
</comment>
<comment type="subunit">
    <text evidence="7">Interacts with RAB35 (GTP-bound form); the interaction is direct and probably recruits ACAP2 to membranes. Interacts with MICALL1; the interaction is indirect through RAB35.</text>
</comment>
<comment type="subcellular location">
    <subcellularLocation>
        <location evidence="7">Endosome membrane</location>
        <topology evidence="7">Peripheral membrane protein</topology>
    </subcellularLocation>
    <subcellularLocation>
        <location evidence="1">Cell membrane</location>
    </subcellularLocation>
</comment>
<comment type="domain">
    <text evidence="1">The ANK domains are required for interaction with RAB35.</text>
</comment>
<organism>
    <name type="scientific">Rattus norvegicus</name>
    <name type="common">Rat</name>
    <dbReference type="NCBI Taxonomy" id="10116"/>
    <lineage>
        <taxon>Eukaryota</taxon>
        <taxon>Metazoa</taxon>
        <taxon>Chordata</taxon>
        <taxon>Craniata</taxon>
        <taxon>Vertebrata</taxon>
        <taxon>Euteleostomi</taxon>
        <taxon>Mammalia</taxon>
        <taxon>Eutheria</taxon>
        <taxon>Euarchontoglires</taxon>
        <taxon>Glires</taxon>
        <taxon>Rodentia</taxon>
        <taxon>Myomorpha</taxon>
        <taxon>Muroidea</taxon>
        <taxon>Muridae</taxon>
        <taxon>Murinae</taxon>
        <taxon>Rattus</taxon>
    </lineage>
</organism>
<name>ACAP2_RAT</name>
<protein>
    <recommendedName>
        <fullName>Arf-GAP with coiled-coil, ANK repeat and PH domain-containing protein 2</fullName>
    </recommendedName>
    <alternativeName>
        <fullName>Centaurin-beta-2</fullName>
        <shortName>Cnt-b2</shortName>
    </alternativeName>
</protein>